<feature type="chain" id="PRO_0000319209" description="Formate-dependent phosphoribosylglycinamide formyltransferase">
    <location>
        <begin position="1"/>
        <end position="393"/>
    </location>
</feature>
<feature type="domain" description="ATP-grasp" evidence="1">
    <location>
        <begin position="119"/>
        <end position="308"/>
    </location>
</feature>
<feature type="binding site" evidence="1">
    <location>
        <begin position="22"/>
        <end position="23"/>
    </location>
    <ligand>
        <name>N(1)-(5-phospho-beta-D-ribosyl)glycinamide</name>
        <dbReference type="ChEBI" id="CHEBI:143788"/>
    </ligand>
</feature>
<feature type="binding site" evidence="1">
    <location>
        <position position="82"/>
    </location>
    <ligand>
        <name>N(1)-(5-phospho-beta-D-ribosyl)glycinamide</name>
        <dbReference type="ChEBI" id="CHEBI:143788"/>
    </ligand>
</feature>
<feature type="binding site" evidence="1">
    <location>
        <position position="114"/>
    </location>
    <ligand>
        <name>ATP</name>
        <dbReference type="ChEBI" id="CHEBI:30616"/>
    </ligand>
</feature>
<feature type="binding site" evidence="1">
    <location>
        <position position="155"/>
    </location>
    <ligand>
        <name>ATP</name>
        <dbReference type="ChEBI" id="CHEBI:30616"/>
    </ligand>
</feature>
<feature type="binding site" evidence="1">
    <location>
        <begin position="160"/>
        <end position="165"/>
    </location>
    <ligand>
        <name>ATP</name>
        <dbReference type="ChEBI" id="CHEBI:30616"/>
    </ligand>
</feature>
<feature type="binding site" evidence="1">
    <location>
        <begin position="195"/>
        <end position="198"/>
    </location>
    <ligand>
        <name>ATP</name>
        <dbReference type="ChEBI" id="CHEBI:30616"/>
    </ligand>
</feature>
<feature type="binding site" evidence="1">
    <location>
        <position position="203"/>
    </location>
    <ligand>
        <name>ATP</name>
        <dbReference type="ChEBI" id="CHEBI:30616"/>
    </ligand>
</feature>
<feature type="binding site" evidence="1">
    <location>
        <position position="267"/>
    </location>
    <ligand>
        <name>Mg(2+)</name>
        <dbReference type="ChEBI" id="CHEBI:18420"/>
    </ligand>
</feature>
<feature type="binding site" evidence="1">
    <location>
        <position position="279"/>
    </location>
    <ligand>
        <name>Mg(2+)</name>
        <dbReference type="ChEBI" id="CHEBI:18420"/>
    </ligand>
</feature>
<feature type="binding site" evidence="1">
    <location>
        <position position="286"/>
    </location>
    <ligand>
        <name>N(1)-(5-phospho-beta-D-ribosyl)glycinamide</name>
        <dbReference type="ChEBI" id="CHEBI:143788"/>
    </ligand>
</feature>
<feature type="binding site" evidence="1">
    <location>
        <position position="356"/>
    </location>
    <ligand>
        <name>N(1)-(5-phospho-beta-D-ribosyl)glycinamide</name>
        <dbReference type="ChEBI" id="CHEBI:143788"/>
    </ligand>
</feature>
<feature type="binding site" evidence="1">
    <location>
        <begin position="363"/>
        <end position="364"/>
    </location>
    <ligand>
        <name>N(1)-(5-phospho-beta-D-ribosyl)glycinamide</name>
        <dbReference type="ChEBI" id="CHEBI:143788"/>
    </ligand>
</feature>
<name>PURT_PSEAB</name>
<proteinExistence type="inferred from homology"/>
<keyword id="KW-0067">ATP-binding</keyword>
<keyword id="KW-0436">Ligase</keyword>
<keyword id="KW-0460">Magnesium</keyword>
<keyword id="KW-0479">Metal-binding</keyword>
<keyword id="KW-0547">Nucleotide-binding</keyword>
<keyword id="KW-0658">Purine biosynthesis</keyword>
<dbReference type="EC" id="6.3.1.21" evidence="1"/>
<dbReference type="EMBL" id="CP000438">
    <property type="protein sequence ID" value="ABJ12985.1"/>
    <property type="molecule type" value="Genomic_DNA"/>
</dbReference>
<dbReference type="RefSeq" id="WP_003092658.1">
    <property type="nucleotide sequence ID" value="NZ_CP034244.1"/>
</dbReference>
<dbReference type="SMR" id="Q02RM4"/>
<dbReference type="KEGG" id="pau:PA14_15890"/>
<dbReference type="PseudoCAP" id="PA14_15890"/>
<dbReference type="HOGENOM" id="CLU_011534_1_3_6"/>
<dbReference type="BioCyc" id="PAER208963:G1G74-1308-MONOMER"/>
<dbReference type="UniPathway" id="UPA00074">
    <property type="reaction ID" value="UER00127"/>
</dbReference>
<dbReference type="Proteomes" id="UP000000653">
    <property type="component" value="Chromosome"/>
</dbReference>
<dbReference type="GO" id="GO:0005829">
    <property type="term" value="C:cytosol"/>
    <property type="evidence" value="ECO:0007669"/>
    <property type="project" value="TreeGrafter"/>
</dbReference>
<dbReference type="GO" id="GO:0005524">
    <property type="term" value="F:ATP binding"/>
    <property type="evidence" value="ECO:0007669"/>
    <property type="project" value="UniProtKB-UniRule"/>
</dbReference>
<dbReference type="GO" id="GO:0000287">
    <property type="term" value="F:magnesium ion binding"/>
    <property type="evidence" value="ECO:0007669"/>
    <property type="project" value="InterPro"/>
</dbReference>
<dbReference type="GO" id="GO:0043815">
    <property type="term" value="F:phosphoribosylglycinamide formyltransferase 2 activity"/>
    <property type="evidence" value="ECO:0007669"/>
    <property type="project" value="UniProtKB-UniRule"/>
</dbReference>
<dbReference type="GO" id="GO:0004644">
    <property type="term" value="F:phosphoribosylglycinamide formyltransferase activity"/>
    <property type="evidence" value="ECO:0007669"/>
    <property type="project" value="InterPro"/>
</dbReference>
<dbReference type="GO" id="GO:0006189">
    <property type="term" value="P:'de novo' IMP biosynthetic process"/>
    <property type="evidence" value="ECO:0007669"/>
    <property type="project" value="UniProtKB-UniRule"/>
</dbReference>
<dbReference type="FunFam" id="3.30.1490.20:FF:000013">
    <property type="entry name" value="Formate-dependent phosphoribosylglycinamide formyltransferase"/>
    <property type="match status" value="1"/>
</dbReference>
<dbReference type="FunFam" id="3.30.470.20:FF:000027">
    <property type="entry name" value="Formate-dependent phosphoribosylglycinamide formyltransferase"/>
    <property type="match status" value="1"/>
</dbReference>
<dbReference type="FunFam" id="3.40.50.20:FF:000007">
    <property type="entry name" value="Formate-dependent phosphoribosylglycinamide formyltransferase"/>
    <property type="match status" value="1"/>
</dbReference>
<dbReference type="Gene3D" id="3.40.50.20">
    <property type="match status" value="1"/>
</dbReference>
<dbReference type="Gene3D" id="3.30.1490.20">
    <property type="entry name" value="ATP-grasp fold, A domain"/>
    <property type="match status" value="1"/>
</dbReference>
<dbReference type="Gene3D" id="3.30.470.20">
    <property type="entry name" value="ATP-grasp fold, B domain"/>
    <property type="match status" value="1"/>
</dbReference>
<dbReference type="HAMAP" id="MF_01643">
    <property type="entry name" value="PurT"/>
    <property type="match status" value="1"/>
</dbReference>
<dbReference type="InterPro" id="IPR011761">
    <property type="entry name" value="ATP-grasp"/>
</dbReference>
<dbReference type="InterPro" id="IPR003135">
    <property type="entry name" value="ATP-grasp_carboxylate-amine"/>
</dbReference>
<dbReference type="InterPro" id="IPR013815">
    <property type="entry name" value="ATP_grasp_subdomain_1"/>
</dbReference>
<dbReference type="InterPro" id="IPR016185">
    <property type="entry name" value="PreATP-grasp_dom_sf"/>
</dbReference>
<dbReference type="InterPro" id="IPR005862">
    <property type="entry name" value="PurT"/>
</dbReference>
<dbReference type="InterPro" id="IPR054350">
    <property type="entry name" value="PurT/PurK_preATP-grasp"/>
</dbReference>
<dbReference type="InterPro" id="IPR048740">
    <property type="entry name" value="PurT_C"/>
</dbReference>
<dbReference type="NCBIfam" id="NF006766">
    <property type="entry name" value="PRK09288.1"/>
    <property type="match status" value="1"/>
</dbReference>
<dbReference type="NCBIfam" id="TIGR01142">
    <property type="entry name" value="purT"/>
    <property type="match status" value="1"/>
</dbReference>
<dbReference type="PANTHER" id="PTHR43055">
    <property type="entry name" value="FORMATE-DEPENDENT PHOSPHORIBOSYLGLYCINAMIDE FORMYLTRANSFERASE"/>
    <property type="match status" value="1"/>
</dbReference>
<dbReference type="PANTHER" id="PTHR43055:SF1">
    <property type="entry name" value="FORMATE-DEPENDENT PHOSPHORIBOSYLGLYCINAMIDE FORMYLTRANSFERASE"/>
    <property type="match status" value="1"/>
</dbReference>
<dbReference type="Pfam" id="PF02222">
    <property type="entry name" value="ATP-grasp"/>
    <property type="match status" value="1"/>
</dbReference>
<dbReference type="Pfam" id="PF21244">
    <property type="entry name" value="PurT_C"/>
    <property type="match status" value="1"/>
</dbReference>
<dbReference type="Pfam" id="PF22660">
    <property type="entry name" value="RS_preATP-grasp-like"/>
    <property type="match status" value="1"/>
</dbReference>
<dbReference type="SUPFAM" id="SSF56059">
    <property type="entry name" value="Glutathione synthetase ATP-binding domain-like"/>
    <property type="match status" value="1"/>
</dbReference>
<dbReference type="SUPFAM" id="SSF52440">
    <property type="entry name" value="PreATP-grasp domain"/>
    <property type="match status" value="1"/>
</dbReference>
<dbReference type="PROSITE" id="PS50975">
    <property type="entry name" value="ATP_GRASP"/>
    <property type="match status" value="1"/>
</dbReference>
<comment type="function">
    <text evidence="1">Involved in the de novo purine biosynthesis. Catalyzes the transfer of formate to 5-phospho-ribosyl-glycinamide (GAR), producing 5-phospho-ribosyl-N-formylglycinamide (FGAR). Formate is provided by PurU via hydrolysis of 10-formyl-tetrahydrofolate.</text>
</comment>
<comment type="catalytic activity">
    <reaction evidence="1">
        <text>N(1)-(5-phospho-beta-D-ribosyl)glycinamide + formate + ATP = N(2)-formyl-N(1)-(5-phospho-beta-D-ribosyl)glycinamide + ADP + phosphate + H(+)</text>
        <dbReference type="Rhea" id="RHEA:24829"/>
        <dbReference type="ChEBI" id="CHEBI:15378"/>
        <dbReference type="ChEBI" id="CHEBI:15740"/>
        <dbReference type="ChEBI" id="CHEBI:30616"/>
        <dbReference type="ChEBI" id="CHEBI:43474"/>
        <dbReference type="ChEBI" id="CHEBI:143788"/>
        <dbReference type="ChEBI" id="CHEBI:147286"/>
        <dbReference type="ChEBI" id="CHEBI:456216"/>
        <dbReference type="EC" id="6.3.1.21"/>
    </reaction>
    <physiologicalReaction direction="left-to-right" evidence="1">
        <dbReference type="Rhea" id="RHEA:24830"/>
    </physiologicalReaction>
</comment>
<comment type="pathway">
    <text evidence="1">Purine metabolism; IMP biosynthesis via de novo pathway; N(2)-formyl-N(1)-(5-phospho-D-ribosyl)glycinamide from N(1)-(5-phospho-D-ribosyl)glycinamide (formate route): step 1/1.</text>
</comment>
<comment type="subunit">
    <text evidence="1">Homodimer.</text>
</comment>
<comment type="similarity">
    <text evidence="1">Belongs to the PurK/PurT family.</text>
</comment>
<gene>
    <name evidence="1" type="primary">purT</name>
    <name type="ordered locus">PA14_15890</name>
</gene>
<accession>Q02RM4</accession>
<organism>
    <name type="scientific">Pseudomonas aeruginosa (strain UCBPP-PA14)</name>
    <dbReference type="NCBI Taxonomy" id="208963"/>
    <lineage>
        <taxon>Bacteria</taxon>
        <taxon>Pseudomonadati</taxon>
        <taxon>Pseudomonadota</taxon>
        <taxon>Gammaproteobacteria</taxon>
        <taxon>Pseudomonadales</taxon>
        <taxon>Pseudomonadaceae</taxon>
        <taxon>Pseudomonas</taxon>
    </lineage>
</organism>
<protein>
    <recommendedName>
        <fullName evidence="1">Formate-dependent phosphoribosylglycinamide formyltransferase</fullName>
        <ecNumber evidence="1">6.3.1.21</ecNumber>
    </recommendedName>
    <alternativeName>
        <fullName evidence="1">5'-phosphoribosylglycinamide transformylase 2</fullName>
    </alternativeName>
    <alternativeName>
        <fullName evidence="1">Formate-dependent GAR transformylase</fullName>
    </alternativeName>
    <alternativeName>
        <fullName evidence="1">GAR transformylase 2</fullName>
        <shortName evidence="1">GART 2</shortName>
    </alternativeName>
    <alternativeName>
        <fullName evidence="1">Non-folate glycinamide ribonucleotide transformylase</fullName>
    </alternativeName>
    <alternativeName>
        <fullName evidence="1">Phosphoribosylglycinamide formyltransferase 2</fullName>
    </alternativeName>
</protein>
<evidence type="ECO:0000255" key="1">
    <source>
        <dbReference type="HAMAP-Rule" id="MF_01643"/>
    </source>
</evidence>
<reference key="1">
    <citation type="journal article" date="2006" name="Genome Biol.">
        <title>Genomic analysis reveals that Pseudomonas aeruginosa virulence is combinatorial.</title>
        <authorList>
            <person name="Lee D.G."/>
            <person name="Urbach J.M."/>
            <person name="Wu G."/>
            <person name="Liberati N.T."/>
            <person name="Feinbaum R.L."/>
            <person name="Miyata S."/>
            <person name="Diggins L.T."/>
            <person name="He J."/>
            <person name="Saucier M."/>
            <person name="Deziel E."/>
            <person name="Friedman L."/>
            <person name="Li L."/>
            <person name="Grills G."/>
            <person name="Montgomery K."/>
            <person name="Kucherlapati R."/>
            <person name="Rahme L.G."/>
            <person name="Ausubel F.M."/>
        </authorList>
    </citation>
    <scope>NUCLEOTIDE SEQUENCE [LARGE SCALE GENOMIC DNA]</scope>
    <source>
        <strain>UCBPP-PA14</strain>
    </source>
</reference>
<sequence length="393" mass="42342">MTRIGTPLSPSATRVLLCGSGELGKEVAIELQRLGCEVIAVDRYGNAPAMQVAHRSHVISMLDGAALRAVIEQEKPHYIVPEIEAIATATLVELEAEGYTVVPTARAAQLTMNREGIRRLAAEELGLPTSPYHFADTFEDYRRGVERVGYPCVVKPIMSSSGKGQSVLKGPDDLQAAWDYAQEGGRAGKGRVIVEGFIDFDYEITLLTVRHVDGTTFCAPIGHRQVKGDYHESWQPQAMSAQALAESERVARAVTEALGGRGLFGVELFVKGDQVWFSEVSPRPHDTGLVTLISQDLSEFALHARAILGLPIPVIRQLGPSASAVILVEGKSRQVAFANLGAALSEADTALRLFGKPEVDGQRRMGVALARDESIDAARAKATRAAQAVRVEL</sequence>